<evidence type="ECO:0000256" key="1">
    <source>
        <dbReference type="SAM" id="MobiDB-lite"/>
    </source>
</evidence>
<evidence type="ECO:0000269" key="2">
    <source>
    </source>
</evidence>
<evidence type="ECO:0000269" key="3">
    <source>
    </source>
</evidence>
<evidence type="ECO:0000269" key="4">
    <source>
    </source>
</evidence>
<evidence type="ECO:0000269" key="5">
    <source>
    </source>
</evidence>
<evidence type="ECO:0000269" key="6">
    <source>
    </source>
</evidence>
<evidence type="ECO:0000269" key="7">
    <source>
    </source>
</evidence>
<evidence type="ECO:0000269" key="8">
    <source>
    </source>
</evidence>
<evidence type="ECO:0000269" key="9">
    <source>
    </source>
</evidence>
<evidence type="ECO:0000269" key="10">
    <source>
    </source>
</evidence>
<evidence type="ECO:0000269" key="11">
    <source>
    </source>
</evidence>
<evidence type="ECO:0000269" key="12">
    <source>
    </source>
</evidence>
<evidence type="ECO:0000269" key="13">
    <source>
    </source>
</evidence>
<evidence type="ECO:0000269" key="14">
    <source>
    </source>
</evidence>
<evidence type="ECO:0000269" key="15">
    <source>
    </source>
</evidence>
<evidence type="ECO:0000269" key="16">
    <source>
    </source>
</evidence>
<evidence type="ECO:0000303" key="17">
    <source>
    </source>
</evidence>
<evidence type="ECO:0000305" key="18"/>
<evidence type="ECO:0007744" key="19">
    <source>
    </source>
</evidence>
<evidence type="ECO:0007744" key="20">
    <source>
    </source>
</evidence>
<evidence type="ECO:0007744" key="21">
    <source>
    </source>
</evidence>
<evidence type="ECO:0007829" key="22">
    <source>
        <dbReference type="PDB" id="2LH0"/>
    </source>
</evidence>
<evidence type="ECO:0007829" key="23">
    <source>
        <dbReference type="PDB" id="3FSS"/>
    </source>
</evidence>
<keyword id="KW-0002">3D-structure</keyword>
<keyword id="KW-0007">Acetylation</keyword>
<keyword id="KW-0143">Chaperone</keyword>
<keyword id="KW-0158">Chromosome</keyword>
<keyword id="KW-0238">DNA-binding</keyword>
<keyword id="KW-0539">Nucleus</keyword>
<keyword id="KW-0597">Phosphoprotein</keyword>
<keyword id="KW-1185">Reference proteome</keyword>
<keyword id="KW-0677">Repeat</keyword>
<keyword id="KW-0804">Transcription</keyword>
<keyword id="KW-0805">Transcription regulation</keyword>
<keyword id="KW-0815">Transposition</keyword>
<name>RT106_YEAST</name>
<reference key="1">
    <citation type="journal article" date="1994" name="Yeast">
        <title>A 21.7 kb DNA segment on the left arm of yeast chromosome XIV carries WHI3, GCR2, SPX18, SPX19, an homologue to the heat shock gene SSB1 and 8 new open reading frames of unknown function.</title>
        <authorList>
            <person name="Jonniaux J.-L."/>
            <person name="Coster F."/>
            <person name="Purnelle B."/>
            <person name="Goffeau A."/>
        </authorList>
    </citation>
    <scope>NUCLEOTIDE SEQUENCE [GENOMIC DNA]</scope>
    <source>
        <strain>ATCC 96604 / S288c / FY1679</strain>
    </source>
</reference>
<reference key="2">
    <citation type="journal article" date="1997" name="Nature">
        <title>The nucleotide sequence of Saccharomyces cerevisiae chromosome XIV and its evolutionary implications.</title>
        <authorList>
            <person name="Philippsen P."/>
            <person name="Kleine K."/>
            <person name="Poehlmann R."/>
            <person name="Duesterhoeft A."/>
            <person name="Hamberg K."/>
            <person name="Hegemann J.H."/>
            <person name="Obermaier B."/>
            <person name="Urrestarazu L.A."/>
            <person name="Aert R."/>
            <person name="Albermann K."/>
            <person name="Altmann R."/>
            <person name="Andre B."/>
            <person name="Baladron V."/>
            <person name="Ballesta J.P.G."/>
            <person name="Becam A.-M."/>
            <person name="Beinhauer J.D."/>
            <person name="Boskovic J."/>
            <person name="Buitrago M.J."/>
            <person name="Bussereau F."/>
            <person name="Coster F."/>
            <person name="Crouzet M."/>
            <person name="D'Angelo M."/>
            <person name="Dal Pero F."/>
            <person name="De Antoni A."/>
            <person name="del Rey F."/>
            <person name="Doignon F."/>
            <person name="Domdey H."/>
            <person name="Dubois E."/>
            <person name="Fiedler T.A."/>
            <person name="Fleig U."/>
            <person name="Floeth M."/>
            <person name="Fritz C."/>
            <person name="Gaillardin C."/>
            <person name="Garcia-Cantalejo J.M."/>
            <person name="Glansdorff N."/>
            <person name="Goffeau A."/>
            <person name="Gueldener U."/>
            <person name="Herbert C.J."/>
            <person name="Heumann K."/>
            <person name="Heuss-Neitzel D."/>
            <person name="Hilbert H."/>
            <person name="Hinni K."/>
            <person name="Iraqui Houssaini I."/>
            <person name="Jacquet M."/>
            <person name="Jimenez A."/>
            <person name="Jonniaux J.-L."/>
            <person name="Karpfinger-Hartl L."/>
            <person name="Lanfranchi G."/>
            <person name="Lepingle A."/>
            <person name="Levesque H."/>
            <person name="Lyck R."/>
            <person name="Maftahi M."/>
            <person name="Mallet L."/>
            <person name="Maurer C.T.C."/>
            <person name="Messenguy F."/>
            <person name="Mewes H.-W."/>
            <person name="Moestl D."/>
            <person name="Nasr F."/>
            <person name="Nicaud J.-M."/>
            <person name="Niedenthal R.K."/>
            <person name="Pandolfo D."/>
            <person name="Pierard A."/>
            <person name="Piravandi E."/>
            <person name="Planta R.J."/>
            <person name="Pohl T.M."/>
            <person name="Purnelle B."/>
            <person name="Rebischung C."/>
            <person name="Remacha M.A."/>
            <person name="Revuelta J.L."/>
            <person name="Rinke M."/>
            <person name="Saiz J.E."/>
            <person name="Sartorello F."/>
            <person name="Scherens B."/>
            <person name="Sen-Gupta M."/>
            <person name="Soler-Mira A."/>
            <person name="Urbanus J.H.M."/>
            <person name="Valle G."/>
            <person name="Van Dyck L."/>
            <person name="Verhasselt P."/>
            <person name="Vierendeels F."/>
            <person name="Vissers S."/>
            <person name="Voet M."/>
            <person name="Volckaert G."/>
            <person name="Wach A."/>
            <person name="Wambutt R."/>
            <person name="Wedler H."/>
            <person name="Zollner A."/>
            <person name="Hani J."/>
        </authorList>
    </citation>
    <scope>NUCLEOTIDE SEQUENCE [LARGE SCALE GENOMIC DNA]</scope>
    <source>
        <strain>ATCC 204508 / S288c</strain>
    </source>
</reference>
<reference key="3">
    <citation type="journal article" date="2014" name="G3 (Bethesda)">
        <title>The reference genome sequence of Saccharomyces cerevisiae: Then and now.</title>
        <authorList>
            <person name="Engel S.R."/>
            <person name="Dietrich F.S."/>
            <person name="Fisk D.G."/>
            <person name="Binkley G."/>
            <person name="Balakrishnan R."/>
            <person name="Costanzo M.C."/>
            <person name="Dwight S.S."/>
            <person name="Hitz B.C."/>
            <person name="Karra K."/>
            <person name="Nash R.S."/>
            <person name="Weng S."/>
            <person name="Wong E.D."/>
            <person name="Lloyd P."/>
            <person name="Skrzypek M.S."/>
            <person name="Miyasato S.R."/>
            <person name="Simison M."/>
            <person name="Cherry J.M."/>
        </authorList>
    </citation>
    <scope>GENOME REANNOTATION</scope>
    <source>
        <strain>ATCC 204508 / S288c</strain>
    </source>
</reference>
<reference key="4">
    <citation type="journal article" date="2001" name="Genetics">
        <title>Multiple regulators of Ty1 transposition in Saccharomyces cerevisiae have conserved roles in genome maintenance.</title>
        <authorList>
            <person name="Scholes D.T."/>
            <person name="Banerjee M."/>
            <person name="Bowen B."/>
            <person name="Curcio M.J."/>
        </authorList>
    </citation>
    <scope>FUNCTION</scope>
</reference>
<reference key="5">
    <citation type="journal article" date="2003" name="Nature">
        <title>Global analysis of protein localization in budding yeast.</title>
        <authorList>
            <person name="Huh W.-K."/>
            <person name="Falvo J.V."/>
            <person name="Gerke L.C."/>
            <person name="Carroll A.S."/>
            <person name="Howson R.W."/>
            <person name="Weissman J.S."/>
            <person name="O'Shea E.K."/>
        </authorList>
    </citation>
    <scope>SUBCELLULAR LOCATION [LARGE SCALE ANALYSIS]</scope>
</reference>
<reference key="6">
    <citation type="journal article" date="2003" name="Nature">
        <title>Global analysis of protein expression in yeast.</title>
        <authorList>
            <person name="Ghaemmaghami S."/>
            <person name="Huh W.-K."/>
            <person name="Bower K."/>
            <person name="Howson R.W."/>
            <person name="Belle A."/>
            <person name="Dephoure N."/>
            <person name="O'Shea E.K."/>
            <person name="Weissman J.S."/>
        </authorList>
    </citation>
    <scope>LEVEL OF PROTEIN EXPRESSION [LARGE SCALE ANALYSIS]</scope>
</reference>
<reference key="7">
    <citation type="journal article" date="2005" name="Proc. Natl. Acad. Sci. U.S.A.">
        <title>Rtt106p is a histone chaperone involved in heterochromatin-mediated silencing.</title>
        <authorList>
            <person name="Huang S."/>
            <person name="Zhou H."/>
            <person name="Katzmann D."/>
            <person name="Hochstrasser M."/>
            <person name="Atanasova E."/>
            <person name="Zhang Z."/>
        </authorList>
    </citation>
    <scope>FUNCTION</scope>
    <scope>INTERACTION WITH HISTONE H3; HISTONE H4 AND RLF2</scope>
</reference>
<reference key="8">
    <citation type="journal article" date="2007" name="EMBO J.">
        <title>A novel role for histone chaperones CAF-1 and Rtt106p in heterochromatin silencing.</title>
        <authorList>
            <person name="Huang S."/>
            <person name="Zhou H."/>
            <person name="Tarara J."/>
            <person name="Zhang Z."/>
        </authorList>
    </citation>
    <scope>FUNCTION</scope>
    <scope>INTERACTION WITH SIR4</scope>
</reference>
<reference key="9">
    <citation type="journal article" date="2008" name="Mol. Cell. Proteomics">
        <title>A multidimensional chromatography technology for in-depth phosphoproteome analysis.</title>
        <authorList>
            <person name="Albuquerque C.P."/>
            <person name="Smolka M.B."/>
            <person name="Payne S.H."/>
            <person name="Bafna V."/>
            <person name="Eng J."/>
            <person name="Zhou H."/>
        </authorList>
    </citation>
    <scope>PHOSPHORYLATION [LARGE SCALE ANALYSIS] AT SER-408 AND SER-411</scope>
    <scope>IDENTIFICATION BY MASS SPECTROMETRY [LARGE SCALE ANALYSIS]</scope>
</reference>
<reference key="10">
    <citation type="journal article" date="2009" name="Mol. Cell">
        <title>Two-color cell array screen reveals interdependent roles for histone chaperones and a chromatin boundary regulator in histone gene repression.</title>
        <authorList>
            <person name="Fillingham J."/>
            <person name="Kainth P."/>
            <person name="Lambert J.P."/>
            <person name="van Bakel H."/>
            <person name="Tsui K."/>
            <person name="Pena-Castillo L."/>
            <person name="Nislow C."/>
            <person name="Figeys D."/>
            <person name="Hughes T.R."/>
            <person name="Greenblatt J."/>
            <person name="Andrews B.J."/>
        </authorList>
    </citation>
    <scope>FUNCTION</scope>
    <scope>INTERACTION WITH HIR AND CAF-1 COMPLEXES; CAC2; MSI1; HIR1; HIR2 AND HPC2</scope>
    <scope>SUBCELLULAR LOCATION</scope>
    <scope>DISRUPTION PHENOTYPE</scope>
    <scope>INTERACTION WITH RTT106</scope>
</reference>
<reference key="11">
    <citation type="journal article" date="2009" name="Science">
        <title>Global analysis of Cdk1 substrate phosphorylation sites provides insights into evolution.</title>
        <authorList>
            <person name="Holt L.J."/>
            <person name="Tuch B.B."/>
            <person name="Villen J."/>
            <person name="Johnson A.D."/>
            <person name="Gygi S.P."/>
            <person name="Morgan D.O."/>
        </authorList>
    </citation>
    <scope>PHOSPHORYLATION [LARGE SCALE ANALYSIS] AT SER-408; SER-411 AND SER-450</scope>
    <scope>IDENTIFICATION BY MASS SPECTROMETRY [LARGE SCALE ANALYSIS]</scope>
</reference>
<reference key="12">
    <citation type="journal article" date="2010" name="Mol. Cell">
        <title>A role for Gcn5 in replication-coupled nucleosome assembly.</title>
        <authorList>
            <person name="Burgess R.J."/>
            <person name="Zhou H."/>
            <person name="Han J."/>
            <person name="Zhang Z."/>
        </authorList>
    </citation>
    <scope>FUNCTION</scope>
    <scope>INTERACTION WITH HISTONE H3</scope>
</reference>
<reference key="13">
    <citation type="journal article" date="2011" name="FEBS Lett.">
        <title>Transcriptome profiling reveals a novel role for trichostatin A in antagonizing histone chaperone Chz1 mediated telomere anti-silencing.</title>
        <authorList>
            <person name="Wan Y."/>
            <person name="Chen W."/>
            <person name="Xing J."/>
            <person name="Tan J."/>
            <person name="Li B."/>
            <person name="Chen H."/>
            <person name="Lin Z."/>
            <person name="Chiang J.H."/>
            <person name="Saleem R.A."/>
        </authorList>
    </citation>
    <scope>FUNCTION</scope>
</reference>
<reference key="14">
    <citation type="journal article" date="2011" name="Genes Dev.">
        <title>Restriction of histone gene transcription to S phase by phosphorylation of a chromatin boundary protein.</title>
        <authorList>
            <person name="Kurat C.F."/>
            <person name="Lambert J.P."/>
            <person name="van Dyk D."/>
            <person name="Tsui K."/>
            <person name="van Bakel H."/>
            <person name="Kaluarachchi S."/>
            <person name="Friesen H."/>
            <person name="Kainth P."/>
            <person name="Nislow C."/>
            <person name="Figeys D."/>
            <person name="Fillingham J."/>
            <person name="Andrews B.J."/>
        </authorList>
    </citation>
    <scope>FUNCTION</scope>
    <scope>DNA-BINDING</scope>
    <scope>INTERACTION WITH YTA7</scope>
    <scope>SUBCELLULAR LOCATION</scope>
    <scope>DISRUPTION PHENOTYPE</scope>
</reference>
<reference key="15">
    <citation type="journal article" date="2011" name="Mol. Cell. Biol.">
        <title>A conserved patch near the C terminus of histone H4 is required for genome stability in budding yeast.</title>
        <authorList>
            <person name="Yu Y."/>
            <person name="Srinivasan M."/>
            <person name="Nakanishi S."/>
            <person name="Leatherwood J."/>
            <person name="Shilatifard A."/>
            <person name="Sternglanz R."/>
        </authorList>
    </citation>
    <scope>FUNCTION</scope>
    <scope>INTERACTION WITH HISTONES H3 AND H4</scope>
</reference>
<reference key="16">
    <citation type="journal article" date="2011" name="PLoS ONE">
        <title>The Saccharomyces cerevisiae histone chaperone Rtt106 mediates the cell cycle recruitment of SWI/SNF and RSC to the HIR-dependent histone genes.</title>
        <authorList>
            <person name="Ferreira M.E."/>
            <person name="Flaherty K."/>
            <person name="Prochasson P."/>
        </authorList>
    </citation>
    <scope>FUNCTION</scope>
    <scope>INTERACTION WITH SWI/SNF; RSC AND HIR COMPLEXES</scope>
</reference>
<reference key="17">
    <citation type="journal article" date="2012" name="Biochim. Biophys. Acta">
        <title>The mitotic Clb cyclins are required to alleviate HIR-mediated repression of the yeast histone genes at the G1/S transition.</title>
        <authorList>
            <person name="Amin A.D."/>
            <person name="Dimova D.K."/>
            <person name="Ferreira M.E."/>
            <person name="Vishnoi N."/>
            <person name="Hancock L.C."/>
            <person name="Osley M.A."/>
            <person name="Prochasson P."/>
        </authorList>
    </citation>
    <scope>FUNCTION</scope>
</reference>
<reference key="18">
    <citation type="journal article" date="2015" name="Genetics">
        <title>Maintenance of nucleosomal balance in cis by conserved AAA-ATPase Yta7.</title>
        <authorList>
            <person name="Lombardi L.M."/>
            <person name="Davis M.D."/>
            <person name="Rine J."/>
        </authorList>
    </citation>
    <scope>DISRUPTION PHENOTYPE</scope>
</reference>
<reference key="19">
    <citation type="journal article" date="2012" name="J. Biol. Chem.">
        <title>The replication-independent histone H3-H4 chaperones HIR, ASF1, and RTT106 co-operate to maintain promoter fidelity.</title>
        <authorList>
            <person name="Silva A.C."/>
            <person name="Xu X."/>
            <person name="Kim H.S."/>
            <person name="Fillingham J."/>
            <person name="Kislinger T."/>
            <person name="Mennella T.A."/>
            <person name="Keogh M.C."/>
        </authorList>
    </citation>
    <scope>FUNCTION</scope>
</reference>
<reference key="20">
    <citation type="journal article" date="2012" name="Proc. Natl. Acad. Sci. U.S.A.">
        <title>N-terminal acetylome analyses and functional insights of the N-terminal acetyltransferase NatB.</title>
        <authorList>
            <person name="Van Damme P."/>
            <person name="Lasa M."/>
            <person name="Polevoda B."/>
            <person name="Gazquez C."/>
            <person name="Elosegui-Artola A."/>
            <person name="Kim D.S."/>
            <person name="De Juan-Pardo E."/>
            <person name="Demeyer K."/>
            <person name="Hole K."/>
            <person name="Larrea E."/>
            <person name="Timmerman E."/>
            <person name="Prieto J."/>
            <person name="Arnesen T."/>
            <person name="Sherman F."/>
            <person name="Gevaert K."/>
            <person name="Aldabe R."/>
        </authorList>
    </citation>
    <scope>ACETYLATION [LARGE SCALE ANALYSIS] AT SER-2</scope>
    <scope>CLEAVAGE OF INITIATOR METHIONINE [LARGE SCALE ANALYSIS]</scope>
    <scope>IDENTIFICATION BY MASS SPECTROMETRY [LARGE SCALE ANALYSIS]</scope>
</reference>
<reference key="21">
    <citation type="journal article" date="2010" name="J. Biol. Chem.">
        <title>Structural analysis of Rtt106p reveals a DNA binding role required for heterochromatin silencing.</title>
        <authorList>
            <person name="Liu Y."/>
            <person name="Huang H."/>
            <person name="Zhou B.O."/>
            <person name="Wang S.S."/>
            <person name="Hu Y."/>
            <person name="Li X."/>
            <person name="Liu J."/>
            <person name="Zang J."/>
            <person name="Niu L."/>
            <person name="Wu J."/>
            <person name="Zhou J.Q."/>
            <person name="Teng M."/>
            <person name="Shi Y."/>
        </authorList>
    </citation>
    <scope>X-RAY CRYSTALLOGRAPHY (2.41 ANGSTROMS) OF 65-320</scope>
    <scope>DNA-BINDING</scope>
    <scope>INTERACTION WITH HISTONES H3 AND H4</scope>
    <scope>FUNCTION</scope>
</reference>
<reference key="22">
    <citation type="journal article" date="2012" name="Nature">
        <title>Structural basis for recognition of H3K56-acetylated histone H3-H4 by the chaperone Rtt106.</title>
        <authorList>
            <person name="Su D."/>
            <person name="Hu Q."/>
            <person name="Li Q."/>
            <person name="Thompson J.R."/>
            <person name="Cui G."/>
            <person name="Fazly A."/>
            <person name="Davies B.A."/>
            <person name="Botuyan M.V."/>
            <person name="Zhang Z."/>
            <person name="Mer G."/>
        </authorList>
    </citation>
    <scope>X-RAY CRYSTALLOGRAPHY (1.43 ANGSTROMS) OF 68-301</scope>
    <scope>DOMAIN</scope>
    <scope>SUBUNIT</scope>
    <scope>INTERACTION WITH HISTONES H3 AND H4</scope>
    <scope>MUTAGENESIS OF ILE-259; TYR-261; PHE-269; GLN-288 AND ILE-294</scope>
</reference>
<reference key="23">
    <citation type="journal article" date="2012" name="Proc. Natl. Acad. Sci. U.S.A.">
        <title>Two surfaces on the histone chaperone Rtt106 mediate histone binding, replication, and silencing.</title>
        <authorList>
            <person name="Zunder R.M."/>
            <person name="Antczak A.J."/>
            <person name="Berger J.M."/>
            <person name="Rine J."/>
        </authorList>
    </citation>
    <scope>X-RAY CRYSTALLOGRAPHY (2.6 ANGSTROMS) OF 69-300</scope>
</reference>
<dbReference type="EMBL" id="X78898">
    <property type="protein sequence ID" value="CAA55502.1"/>
    <property type="molecule type" value="Genomic_DNA"/>
</dbReference>
<dbReference type="EMBL" id="Z71482">
    <property type="protein sequence ID" value="CAA96106.1"/>
    <property type="molecule type" value="Genomic_DNA"/>
</dbReference>
<dbReference type="EMBL" id="BK006947">
    <property type="protein sequence ID" value="DAA10350.1"/>
    <property type="molecule type" value="Genomic_DNA"/>
</dbReference>
<dbReference type="PIR" id="S50725">
    <property type="entry name" value="S50725"/>
</dbReference>
<dbReference type="RefSeq" id="NP_014193.1">
    <property type="nucleotide sequence ID" value="NM_001183044.1"/>
</dbReference>
<dbReference type="PDB" id="2LH0">
    <property type="method" value="NMR"/>
    <property type="chains" value="A/B=1-67"/>
</dbReference>
<dbReference type="PDB" id="3FSS">
    <property type="method" value="X-ray"/>
    <property type="resolution" value="1.43 A"/>
    <property type="chains" value="A=68-301"/>
</dbReference>
<dbReference type="PDB" id="3GYO">
    <property type="method" value="X-ray"/>
    <property type="resolution" value="3.10 A"/>
    <property type="chains" value="A=65-320"/>
</dbReference>
<dbReference type="PDB" id="3GYP">
    <property type="method" value="X-ray"/>
    <property type="resolution" value="2.41 A"/>
    <property type="chains" value="A=65-320"/>
</dbReference>
<dbReference type="PDB" id="3TO1">
    <property type="method" value="X-ray"/>
    <property type="resolution" value="2.60 A"/>
    <property type="chains" value="A/B=69-300"/>
</dbReference>
<dbReference type="PDB" id="3TVV">
    <property type="method" value="X-ray"/>
    <property type="resolution" value="2.59 A"/>
    <property type="chains" value="A/B=68-315"/>
</dbReference>
<dbReference type="PDB" id="3TW1">
    <property type="method" value="X-ray"/>
    <property type="resolution" value="1.77 A"/>
    <property type="chains" value="A=68-301"/>
</dbReference>
<dbReference type="PDB" id="6THL">
    <property type="method" value="X-ray"/>
    <property type="resolution" value="2.80 A"/>
    <property type="chains" value="A=65-301"/>
</dbReference>
<dbReference type="PDBsum" id="2LH0"/>
<dbReference type="PDBsum" id="3FSS"/>
<dbReference type="PDBsum" id="3GYO"/>
<dbReference type="PDBsum" id="3GYP"/>
<dbReference type="PDBsum" id="3TO1"/>
<dbReference type="PDBsum" id="3TVV"/>
<dbReference type="PDBsum" id="3TW1"/>
<dbReference type="PDBsum" id="6THL"/>
<dbReference type="SMR" id="P40161"/>
<dbReference type="BioGRID" id="35630">
    <property type="interactions" value="206"/>
</dbReference>
<dbReference type="DIP" id="DIP-4292N"/>
<dbReference type="FunCoup" id="P40161">
    <property type="interactions" value="193"/>
</dbReference>
<dbReference type="IntAct" id="P40161">
    <property type="interactions" value="61"/>
</dbReference>
<dbReference type="MINT" id="P40161"/>
<dbReference type="STRING" id="4932.YNL206C"/>
<dbReference type="iPTMnet" id="P40161"/>
<dbReference type="PaxDb" id="4932-YNL206C"/>
<dbReference type="PeptideAtlas" id="P40161"/>
<dbReference type="EnsemblFungi" id="YNL206C_mRNA">
    <property type="protein sequence ID" value="YNL206C"/>
    <property type="gene ID" value="YNL206C"/>
</dbReference>
<dbReference type="GeneID" id="855515"/>
<dbReference type="KEGG" id="sce:YNL206C"/>
<dbReference type="AGR" id="SGD:S000005150"/>
<dbReference type="SGD" id="S000005150">
    <property type="gene designation" value="RTT106"/>
</dbReference>
<dbReference type="VEuPathDB" id="FungiDB:YNL206C"/>
<dbReference type="eggNOG" id="ENOG502R9PE">
    <property type="taxonomic scope" value="Eukaryota"/>
</dbReference>
<dbReference type="HOGENOM" id="CLU_040939_1_0_1"/>
<dbReference type="InParanoid" id="P40161"/>
<dbReference type="OMA" id="TRLTFNV"/>
<dbReference type="OrthoDB" id="75754at2759"/>
<dbReference type="BioCyc" id="YEAST:G3O-33212-MONOMER"/>
<dbReference type="BioGRID-ORCS" id="855515">
    <property type="hits" value="0 hits in 10 CRISPR screens"/>
</dbReference>
<dbReference type="EvolutionaryTrace" id="P40161"/>
<dbReference type="PRO" id="PR:P40161"/>
<dbReference type="Proteomes" id="UP000002311">
    <property type="component" value="Chromosome XIV"/>
</dbReference>
<dbReference type="RNAct" id="P40161">
    <property type="molecule type" value="protein"/>
</dbReference>
<dbReference type="GO" id="GO:0005694">
    <property type="term" value="C:chromosome"/>
    <property type="evidence" value="ECO:0007669"/>
    <property type="project" value="UniProtKB-SubCell"/>
</dbReference>
<dbReference type="GO" id="GO:0005634">
    <property type="term" value="C:nucleus"/>
    <property type="evidence" value="ECO:0007005"/>
    <property type="project" value="SGD"/>
</dbReference>
<dbReference type="GO" id="GO:0003690">
    <property type="term" value="F:double-stranded DNA binding"/>
    <property type="evidence" value="ECO:0000314"/>
    <property type="project" value="SGD"/>
</dbReference>
<dbReference type="GO" id="GO:0042393">
    <property type="term" value="F:histone binding"/>
    <property type="evidence" value="ECO:0000314"/>
    <property type="project" value="SGD"/>
</dbReference>
<dbReference type="GO" id="GO:0042802">
    <property type="term" value="F:identical protein binding"/>
    <property type="evidence" value="ECO:0000353"/>
    <property type="project" value="IntAct"/>
</dbReference>
<dbReference type="GO" id="GO:0031491">
    <property type="term" value="F:nucleosome binding"/>
    <property type="evidence" value="ECO:0000318"/>
    <property type="project" value="GO_Central"/>
</dbReference>
<dbReference type="GO" id="GO:0006325">
    <property type="term" value="P:chromatin organization"/>
    <property type="evidence" value="ECO:0000315"/>
    <property type="project" value="SGD"/>
</dbReference>
<dbReference type="GO" id="GO:0006335">
    <property type="term" value="P:DNA replication-dependent chromatin assembly"/>
    <property type="evidence" value="ECO:0000316"/>
    <property type="project" value="SGD"/>
</dbReference>
<dbReference type="GO" id="GO:0031507">
    <property type="term" value="P:heterochromatin formation"/>
    <property type="evidence" value="ECO:0000315"/>
    <property type="project" value="SGD"/>
</dbReference>
<dbReference type="GO" id="GO:0000122">
    <property type="term" value="P:negative regulation of transcription by RNA polymerase II"/>
    <property type="evidence" value="ECO:0000315"/>
    <property type="project" value="SGD"/>
</dbReference>
<dbReference type="GO" id="GO:0006368">
    <property type="term" value="P:transcription elongation by RNA polymerase II"/>
    <property type="evidence" value="ECO:0000315"/>
    <property type="project" value="SGD"/>
</dbReference>
<dbReference type="GO" id="GO:0032196">
    <property type="term" value="P:transposition"/>
    <property type="evidence" value="ECO:0007669"/>
    <property type="project" value="UniProtKB-KW"/>
</dbReference>
<dbReference type="CDD" id="cd13303">
    <property type="entry name" value="PH1-like_Rtt106"/>
    <property type="match status" value="1"/>
</dbReference>
<dbReference type="CDD" id="cd13304">
    <property type="entry name" value="PH2-like_Rtt106"/>
    <property type="match status" value="1"/>
</dbReference>
<dbReference type="CDD" id="cd11604">
    <property type="entry name" value="RTT106_N"/>
    <property type="match status" value="1"/>
</dbReference>
<dbReference type="DisProt" id="DP01485"/>
<dbReference type="Gene3D" id="2.30.29.120">
    <property type="match status" value="1"/>
</dbReference>
<dbReference type="Gene3D" id="2.30.29.30">
    <property type="entry name" value="Pleckstrin-homology domain (PH domain)/Phosphotyrosine-binding domain (PTB)"/>
    <property type="match status" value="1"/>
</dbReference>
<dbReference type="Gene3D" id="6.10.10.70">
    <property type="entry name" value="RTT106-like"/>
    <property type="match status" value="1"/>
</dbReference>
<dbReference type="InterPro" id="IPR011993">
    <property type="entry name" value="PH-like_dom_sf"/>
</dbReference>
<dbReference type="InterPro" id="IPR013719">
    <property type="entry name" value="RTT106/SPT16-like_middle_dom"/>
</dbReference>
<dbReference type="InterPro" id="IPR050454">
    <property type="entry name" value="RTT106/SSRP1_HistChap/FACT"/>
</dbReference>
<dbReference type="InterPro" id="IPR040993">
    <property type="entry name" value="Rtt106_N"/>
</dbReference>
<dbReference type="InterPro" id="IPR044891">
    <property type="entry name" value="Rtt106_N_sf"/>
</dbReference>
<dbReference type="InterPro" id="IPR040770">
    <property type="entry name" value="Rtt106_PH"/>
</dbReference>
<dbReference type="PANTHER" id="PTHR45849">
    <property type="entry name" value="FACT COMPLEX SUBUNIT SSRP1"/>
    <property type="match status" value="1"/>
</dbReference>
<dbReference type="PANTHER" id="PTHR45849:SF3">
    <property type="entry name" value="HISTONE CHAPERONE RTT106"/>
    <property type="match status" value="1"/>
</dbReference>
<dbReference type="Pfam" id="PF18469">
    <property type="entry name" value="PH_18"/>
    <property type="match status" value="1"/>
</dbReference>
<dbReference type="Pfam" id="PF18215">
    <property type="entry name" value="Rtt106_N"/>
    <property type="match status" value="1"/>
</dbReference>
<dbReference type="Pfam" id="PF08512">
    <property type="entry name" value="Rttp106-like_middle"/>
    <property type="match status" value="1"/>
</dbReference>
<dbReference type="SMART" id="SM01287">
    <property type="entry name" value="Rtt106"/>
    <property type="match status" value="1"/>
</dbReference>
<dbReference type="SUPFAM" id="SSF50729">
    <property type="entry name" value="PH domain-like"/>
    <property type="match status" value="1"/>
</dbReference>
<comment type="function">
    <text evidence="2 4 5 6 7 8 9 10 11 12 13 14">Histones H3 and H4 chaperone involved in the nucleosome formation and heterochromatin silencing. Required for the deposition of H3K56ac-carrying H3-H4 complex onto newly-replicated DNA. Plays a role in the transcriptional regulation of the cell-cycle dependent histone genes by directly recruiting the SWI/SNF and RSC chromatin remodeling complexes to the histone genes in a cell cycle dependent manner. In cooperation with HIR and ASF1, creates a repressive structure at the core histone gene promoter and contributes to their repression outside of S phase. Involved in regulation of Ty1 transposition.</text>
</comment>
<comment type="subunit">
    <text evidence="4 5 6 7 8 9 10 14 15">Homodimers (via the N-terminal domain) (PubMed:22307274). Interacts with the SWI/SNF complex (PubMed:21698254). Interacts with the RSC complex (PubMed:21698254). Interacts with the HIR complex (PubMed:19683497, PubMed:21698254). Interacts with the CAF-1 complex (PubMed:19683497). Interacts with RLF2 (PubMed:16157874). Interacts with SIR4 (PubMed:17410207). Interacts with YTA7 (PubMed:22156209). Interacts with CAC2 (PubMed:19683497). Interacts with HPC2 (PubMed:19683497). Interacts with HIR2 (PubMed:19683497). Interacts with MSI1 (PubMed:19683497). Interacts with HIR1 (PubMed:19683497). Interacts with histone H3 (PubMed:16157874, PubMed:20007951, PubMed:20188666, PubMed:21444721, PubMed:22307274). Interacts with histone H4 (PubMed:16157874, PubMed:20007951, PubMed:21444721, PubMed:22307274).</text>
</comment>
<comment type="interaction">
    <interactant intactId="EBI-29119">
        <id>P40161</id>
    </interactant>
    <interactant intactId="EBI-3003">
        <id>P32447</id>
        <label>ASF1</label>
    </interactant>
    <organismsDiffer>false</organismsDiffer>
    <experiments>5</experiments>
</comment>
<comment type="interaction">
    <interactant intactId="EBI-29119">
        <id>P40161</id>
    </interactant>
    <interactant intactId="EBI-8098">
        <id>P61830</id>
        <label>HHT2</label>
    </interactant>
    <organismsDiffer>false</organismsDiffer>
    <experiments>7</experiments>
</comment>
<comment type="interaction">
    <interactant intactId="EBI-29119">
        <id>P40161</id>
    </interactant>
    <interactant intactId="EBI-29119">
        <id>P40161</id>
        <label>RTT106</label>
    </interactant>
    <organismsDiffer>false</organismsDiffer>
    <experiments>5</experiments>
</comment>
<comment type="interaction">
    <interactant intactId="EBI-29119">
        <id>P40161</id>
    </interactant>
    <interactant intactId="EBI-17237">
        <id>P11978</id>
        <label>SIR4</label>
    </interactant>
    <organismsDiffer>false</organismsDiffer>
    <experiments>2</experiments>
</comment>
<comment type="subcellular location">
    <subcellularLocation>
        <location evidence="6">Nucleus</location>
    </subcellularLocation>
    <subcellularLocation>
        <location evidence="6">Chromosome</location>
    </subcellularLocation>
    <text evidence="6">Localizes to the promoter region of histones HTA1-HTB1, HHT1-HHF1, and HHT2-HHF2,.</text>
</comment>
<comment type="domain">
    <text evidence="15">The N-ter domain (residues 1-67) homodimerizes and interacts with H3-H4 independently of acetylation while the double pleckstrin-homology (PH) domain (residues 68-301) binds the 'Lys-56'-containing region of H3.</text>
</comment>
<comment type="disruption phenotype">
    <text evidence="6 14 16">Decreases nucleosomal density (PubMed:19683497, PubMed:25406467). Increases HTA1 RNA level; simultaneous disruption RTT109 alleviates the effect (PubMed:19683497, PubMed:22156209).</text>
</comment>
<comment type="miscellaneous">
    <text evidence="3">Present with 11100 molecules/cell in log phase SD medium.</text>
</comment>
<comment type="similarity">
    <text evidence="18">Belongs to the RTT106 family.</text>
</comment>
<feature type="initiator methionine" description="Removed" evidence="21">
    <location>
        <position position="1"/>
    </location>
</feature>
<feature type="chain" id="PRO_0000203392" description="Histone chaperone RTT106">
    <location>
        <begin position="2"/>
        <end position="455"/>
    </location>
</feature>
<feature type="domain" description="PH 1">
    <location>
        <begin position="68"/>
        <end position="200"/>
    </location>
</feature>
<feature type="domain" description="PH 2">
    <location>
        <begin position="217"/>
        <end position="301"/>
    </location>
</feature>
<feature type="region of interest" description="Dimeric region">
    <location>
        <begin position="2"/>
        <end position="67"/>
    </location>
</feature>
<feature type="region of interest" description="Double PH domain">
    <location>
        <begin position="68"/>
        <end position="301"/>
    </location>
</feature>
<feature type="region of interest" description="Disordered" evidence="1">
    <location>
        <begin position="305"/>
        <end position="455"/>
    </location>
</feature>
<feature type="compositionally biased region" description="Basic and acidic residues" evidence="1">
    <location>
        <begin position="305"/>
        <end position="314"/>
    </location>
</feature>
<feature type="compositionally biased region" description="Polar residues" evidence="1">
    <location>
        <begin position="319"/>
        <end position="339"/>
    </location>
</feature>
<feature type="compositionally biased region" description="Acidic residues" evidence="1">
    <location>
        <begin position="350"/>
        <end position="366"/>
    </location>
</feature>
<feature type="compositionally biased region" description="Acidic residues" evidence="1">
    <location>
        <begin position="376"/>
        <end position="395"/>
    </location>
</feature>
<feature type="compositionally biased region" description="Polar residues" evidence="1">
    <location>
        <begin position="402"/>
        <end position="418"/>
    </location>
</feature>
<feature type="compositionally biased region" description="Basic and acidic residues" evidence="1">
    <location>
        <begin position="420"/>
        <end position="429"/>
    </location>
</feature>
<feature type="compositionally biased region" description="Acidic residues" evidence="1">
    <location>
        <begin position="430"/>
        <end position="455"/>
    </location>
</feature>
<feature type="modified residue" description="N-acetylserine" evidence="21">
    <location>
        <position position="2"/>
    </location>
</feature>
<feature type="modified residue" description="Phosphoserine" evidence="19 20">
    <location>
        <position position="408"/>
    </location>
</feature>
<feature type="modified residue" description="Phosphoserine" evidence="19 20">
    <location>
        <position position="411"/>
    </location>
</feature>
<feature type="modified residue" description="Phosphoserine" evidence="20">
    <location>
        <position position="450"/>
    </location>
</feature>
<feature type="mutagenesis site" description="Decreases histone-binding." evidence="15">
    <original>I</original>
    <variation>A</variation>
    <location>
        <position position="259"/>
    </location>
</feature>
<feature type="mutagenesis site" description="Impairs histone-binding." evidence="15">
    <original>Y</original>
    <variation>A</variation>
    <location>
        <position position="261"/>
    </location>
</feature>
<feature type="mutagenesis site" description="Impairs histone-binding." evidence="15">
    <original>F</original>
    <variation>A</variation>
    <location>
        <position position="269"/>
    </location>
</feature>
<feature type="mutagenesis site" description="Decreases histone-binding." evidence="15">
    <original>Q</original>
    <variation>A</variation>
    <location>
        <position position="288"/>
    </location>
</feature>
<feature type="mutagenesis site" description="Impairs histone-binding.">
    <original>Y</original>
    <variation>A</variation>
    <location>
        <position position="291"/>
    </location>
</feature>
<feature type="mutagenesis site" description="Impairs histone-binding." evidence="15">
    <original>I</original>
    <variation>A</variation>
    <location>
        <position position="294"/>
    </location>
</feature>
<feature type="helix" evidence="22">
    <location>
        <begin position="5"/>
        <end position="8"/>
    </location>
</feature>
<feature type="helix" evidence="22">
    <location>
        <begin position="11"/>
        <end position="21"/>
    </location>
</feature>
<feature type="helix" evidence="22">
    <location>
        <begin position="27"/>
        <end position="41"/>
    </location>
</feature>
<feature type="strand" evidence="22">
    <location>
        <begin position="60"/>
        <end position="63"/>
    </location>
</feature>
<feature type="strand" evidence="23">
    <location>
        <begin position="71"/>
        <end position="85"/>
    </location>
</feature>
<feature type="strand" evidence="23">
    <location>
        <begin position="87"/>
        <end position="95"/>
    </location>
</feature>
<feature type="turn" evidence="23">
    <location>
        <begin position="97"/>
        <end position="99"/>
    </location>
</feature>
<feature type="strand" evidence="23">
    <location>
        <begin position="102"/>
        <end position="108"/>
    </location>
</feature>
<feature type="strand" evidence="23">
    <location>
        <begin position="111"/>
        <end position="116"/>
    </location>
</feature>
<feature type="helix" evidence="23">
    <location>
        <begin position="119"/>
        <end position="122"/>
    </location>
</feature>
<feature type="strand" evidence="23">
    <location>
        <begin position="123"/>
        <end position="130"/>
    </location>
</feature>
<feature type="strand" evidence="23">
    <location>
        <begin position="137"/>
        <end position="145"/>
    </location>
</feature>
<feature type="helix" evidence="23">
    <location>
        <begin position="148"/>
        <end position="150"/>
    </location>
</feature>
<feature type="strand" evidence="23">
    <location>
        <begin position="156"/>
        <end position="161"/>
    </location>
</feature>
<feature type="helix" evidence="23">
    <location>
        <begin position="162"/>
        <end position="171"/>
    </location>
</feature>
<feature type="helix" evidence="23">
    <location>
        <begin position="183"/>
        <end position="195"/>
    </location>
</feature>
<feature type="strand" evidence="23">
    <location>
        <begin position="220"/>
        <end position="235"/>
    </location>
</feature>
<feature type="strand" evidence="23">
    <location>
        <begin position="237"/>
        <end position="247"/>
    </location>
</feature>
<feature type="strand" evidence="23">
    <location>
        <begin position="249"/>
        <end position="252"/>
    </location>
</feature>
<feature type="helix" evidence="23">
    <location>
        <begin position="253"/>
        <end position="255"/>
    </location>
</feature>
<feature type="strand" evidence="23">
    <location>
        <begin position="256"/>
        <end position="263"/>
    </location>
</feature>
<feature type="strand" evidence="23">
    <location>
        <begin position="266"/>
        <end position="275"/>
    </location>
</feature>
<feature type="strand" evidence="23">
    <location>
        <begin position="280"/>
        <end position="287"/>
    </location>
</feature>
<feature type="helix" evidence="23">
    <location>
        <begin position="288"/>
        <end position="290"/>
    </location>
</feature>
<feature type="helix" evidence="23">
    <location>
        <begin position="291"/>
        <end position="299"/>
    </location>
</feature>
<proteinExistence type="evidence at protein level"/>
<accession>P40161</accession>
<accession>D6W0Y4</accession>
<organism>
    <name type="scientific">Saccharomyces cerevisiae (strain ATCC 204508 / S288c)</name>
    <name type="common">Baker's yeast</name>
    <dbReference type="NCBI Taxonomy" id="559292"/>
    <lineage>
        <taxon>Eukaryota</taxon>
        <taxon>Fungi</taxon>
        <taxon>Dikarya</taxon>
        <taxon>Ascomycota</taxon>
        <taxon>Saccharomycotina</taxon>
        <taxon>Saccharomycetes</taxon>
        <taxon>Saccharomycetales</taxon>
        <taxon>Saccharomycetaceae</taxon>
        <taxon>Saccharomyces</taxon>
    </lineage>
</organism>
<protein>
    <recommendedName>
        <fullName>Histone chaperone RTT106</fullName>
    </recommendedName>
    <alternativeName>
        <fullName>Regulator of Ty1 transposition protein 106</fullName>
    </alternativeName>
</protein>
<gene>
    <name evidence="17" type="primary">RTT106</name>
    <name type="ordered locus">YNL206C</name>
    <name type="ORF">N1346</name>
</gene>
<sequence>MSKLFLDELPESLSRKIGTVVRVLPSSLEIFEELYKYALNENSNDRSGRHKKPRIDVSSDLLKTDEISETNTIFKLEGVSVLSPLRKKLDLVFYLSNVDGSPVITLLKGNDRELSIYQLNKNIKMASFLPVPEKPNLIYLFMTYTSCEDNKFSEPVVMTLNKENTLNQFKNLGLLDSNVTDFEKCVEYIRKQAILTGFKISNPFVNSTLVDTDAEKINSFHLQCHRGTKEGTLYFLPDHIIFGFKKPILLFDASDIESITYSSITRLTFNASLVTKDGEKYEFSMIDQTEYAKIDDYVKRKQMKDKSMSEELKAKSKSKGQATDGTADQPSILQEATRQMQDEKKAGVFSDDDEENDQNFEAESDLSDGSGQESSDGAEDGEEAEEDDEEDDEEEDKKGQSALNRDNSFASINGQPEQELQYKEFKEPLELEDIPIEIDNDDDEDDEDGSGVEYD</sequence>